<evidence type="ECO:0000250" key="1"/>
<evidence type="ECO:0000255" key="2">
    <source>
        <dbReference type="HAMAP-Rule" id="MF_00103"/>
    </source>
</evidence>
<gene>
    <name evidence="2" type="primary">mutM</name>
    <name evidence="2" type="synonym">fpg</name>
    <name type="ordered locus">Meso_4100</name>
</gene>
<sequence>MPELPEVETVRRGLEPVMEGARIIHVEQRRADLRFPFPAGFSEHVKGCRIEALGRRAKYLLLHLENGRVLVSHLGMSGSFRIEESGSDKLRGDFHYARSKAEKHDHVVFHLARHEGGSARVIYNDPRRFGFMLLLDSADLEAHPLFAGLGVEPTGNALDGALLARLLAGKRAPLKAALMDQRLVAGLGNIYVCEALWRAGLSPRRIAATIATREGKSTGRSERLAGAIRTVIAEAIAAGGSSLKDYVQADGSLGYFQHSFSVYDREGKPCRKEGCSGTIQRFVQGGRSTFYCPICQR</sequence>
<feature type="initiator methionine" description="Removed" evidence="1">
    <location>
        <position position="1"/>
    </location>
</feature>
<feature type="chain" id="PRO_1000008714" description="Formamidopyrimidine-DNA glycosylase">
    <location>
        <begin position="2"/>
        <end position="297"/>
    </location>
</feature>
<feature type="zinc finger region" description="FPG-type" evidence="2">
    <location>
        <begin position="261"/>
        <end position="297"/>
    </location>
</feature>
<feature type="active site" description="Schiff-base intermediate with DNA" evidence="2">
    <location>
        <position position="2"/>
    </location>
</feature>
<feature type="active site" description="Proton donor" evidence="2">
    <location>
        <position position="3"/>
    </location>
</feature>
<feature type="active site" description="Proton donor; for beta-elimination activity" evidence="2">
    <location>
        <position position="58"/>
    </location>
</feature>
<feature type="active site" description="Proton donor; for delta-elimination activity" evidence="2">
    <location>
        <position position="287"/>
    </location>
</feature>
<feature type="binding site" evidence="2">
    <location>
        <position position="104"/>
    </location>
    <ligand>
        <name>DNA</name>
        <dbReference type="ChEBI" id="CHEBI:16991"/>
    </ligand>
</feature>
<feature type="binding site" evidence="2">
    <location>
        <position position="127"/>
    </location>
    <ligand>
        <name>DNA</name>
        <dbReference type="ChEBI" id="CHEBI:16991"/>
    </ligand>
</feature>
<feature type="binding site" evidence="2">
    <location>
        <position position="170"/>
    </location>
    <ligand>
        <name>DNA</name>
        <dbReference type="ChEBI" id="CHEBI:16991"/>
    </ligand>
</feature>
<organism>
    <name type="scientific">Chelativorans sp. (strain BNC1)</name>
    <dbReference type="NCBI Taxonomy" id="266779"/>
    <lineage>
        <taxon>Bacteria</taxon>
        <taxon>Pseudomonadati</taxon>
        <taxon>Pseudomonadota</taxon>
        <taxon>Alphaproteobacteria</taxon>
        <taxon>Hyphomicrobiales</taxon>
        <taxon>Phyllobacteriaceae</taxon>
        <taxon>Chelativorans</taxon>
    </lineage>
</organism>
<dbReference type="EC" id="3.2.2.23" evidence="2"/>
<dbReference type="EC" id="4.2.99.18" evidence="2"/>
<dbReference type="EMBL" id="CP000390">
    <property type="protein sequence ID" value="ABG65467.1"/>
    <property type="molecule type" value="Genomic_DNA"/>
</dbReference>
<dbReference type="SMR" id="Q11AV8"/>
<dbReference type="STRING" id="266779.Meso_4100"/>
<dbReference type="KEGG" id="mes:Meso_4100"/>
<dbReference type="eggNOG" id="COG0266">
    <property type="taxonomic scope" value="Bacteria"/>
</dbReference>
<dbReference type="HOGENOM" id="CLU_038423_1_1_5"/>
<dbReference type="OrthoDB" id="9800855at2"/>
<dbReference type="GO" id="GO:0034039">
    <property type="term" value="F:8-oxo-7,8-dihydroguanine DNA N-glycosylase activity"/>
    <property type="evidence" value="ECO:0007669"/>
    <property type="project" value="TreeGrafter"/>
</dbReference>
<dbReference type="GO" id="GO:0140078">
    <property type="term" value="F:class I DNA-(apurinic or apyrimidinic site) endonuclease activity"/>
    <property type="evidence" value="ECO:0007669"/>
    <property type="project" value="UniProtKB-EC"/>
</dbReference>
<dbReference type="GO" id="GO:0003684">
    <property type="term" value="F:damaged DNA binding"/>
    <property type="evidence" value="ECO:0007669"/>
    <property type="project" value="InterPro"/>
</dbReference>
<dbReference type="GO" id="GO:0008270">
    <property type="term" value="F:zinc ion binding"/>
    <property type="evidence" value="ECO:0007669"/>
    <property type="project" value="UniProtKB-UniRule"/>
</dbReference>
<dbReference type="GO" id="GO:0006284">
    <property type="term" value="P:base-excision repair"/>
    <property type="evidence" value="ECO:0007669"/>
    <property type="project" value="InterPro"/>
</dbReference>
<dbReference type="CDD" id="cd08966">
    <property type="entry name" value="EcFpg-like_N"/>
    <property type="match status" value="1"/>
</dbReference>
<dbReference type="FunFam" id="1.10.8.50:FF:000003">
    <property type="entry name" value="Formamidopyrimidine-DNA glycosylase"/>
    <property type="match status" value="1"/>
</dbReference>
<dbReference type="Gene3D" id="1.10.8.50">
    <property type="match status" value="1"/>
</dbReference>
<dbReference type="Gene3D" id="3.20.190.10">
    <property type="entry name" value="MutM-like, N-terminal"/>
    <property type="match status" value="1"/>
</dbReference>
<dbReference type="HAMAP" id="MF_00103">
    <property type="entry name" value="Fapy_DNA_glycosyl"/>
    <property type="match status" value="1"/>
</dbReference>
<dbReference type="InterPro" id="IPR015886">
    <property type="entry name" value="DNA_glyclase/AP_lyase_DNA-bd"/>
</dbReference>
<dbReference type="InterPro" id="IPR015887">
    <property type="entry name" value="DNA_glyclase_Znf_dom_DNA_BS"/>
</dbReference>
<dbReference type="InterPro" id="IPR020629">
    <property type="entry name" value="Formamido-pyr_DNA_Glyclase"/>
</dbReference>
<dbReference type="InterPro" id="IPR012319">
    <property type="entry name" value="FPG_cat"/>
</dbReference>
<dbReference type="InterPro" id="IPR035937">
    <property type="entry name" value="MutM-like_N-ter"/>
</dbReference>
<dbReference type="InterPro" id="IPR010979">
    <property type="entry name" value="Ribosomal_uS13-like_H2TH"/>
</dbReference>
<dbReference type="InterPro" id="IPR000214">
    <property type="entry name" value="Znf_DNA_glyclase/AP_lyase"/>
</dbReference>
<dbReference type="InterPro" id="IPR010663">
    <property type="entry name" value="Znf_FPG/IleRS"/>
</dbReference>
<dbReference type="NCBIfam" id="TIGR00577">
    <property type="entry name" value="fpg"/>
    <property type="match status" value="1"/>
</dbReference>
<dbReference type="NCBIfam" id="NF002211">
    <property type="entry name" value="PRK01103.1"/>
    <property type="match status" value="1"/>
</dbReference>
<dbReference type="PANTHER" id="PTHR22993">
    <property type="entry name" value="FORMAMIDOPYRIMIDINE-DNA GLYCOSYLASE"/>
    <property type="match status" value="1"/>
</dbReference>
<dbReference type="PANTHER" id="PTHR22993:SF9">
    <property type="entry name" value="FORMAMIDOPYRIMIDINE-DNA GLYCOSYLASE"/>
    <property type="match status" value="1"/>
</dbReference>
<dbReference type="Pfam" id="PF01149">
    <property type="entry name" value="Fapy_DNA_glyco"/>
    <property type="match status" value="1"/>
</dbReference>
<dbReference type="Pfam" id="PF06831">
    <property type="entry name" value="H2TH"/>
    <property type="match status" value="1"/>
</dbReference>
<dbReference type="Pfam" id="PF06827">
    <property type="entry name" value="zf-FPG_IleRS"/>
    <property type="match status" value="1"/>
</dbReference>
<dbReference type="SMART" id="SM00898">
    <property type="entry name" value="Fapy_DNA_glyco"/>
    <property type="match status" value="1"/>
</dbReference>
<dbReference type="SMART" id="SM01232">
    <property type="entry name" value="H2TH"/>
    <property type="match status" value="1"/>
</dbReference>
<dbReference type="SUPFAM" id="SSF57716">
    <property type="entry name" value="Glucocorticoid receptor-like (DNA-binding domain)"/>
    <property type="match status" value="1"/>
</dbReference>
<dbReference type="SUPFAM" id="SSF81624">
    <property type="entry name" value="N-terminal domain of MutM-like DNA repair proteins"/>
    <property type="match status" value="1"/>
</dbReference>
<dbReference type="SUPFAM" id="SSF46946">
    <property type="entry name" value="S13-like H2TH domain"/>
    <property type="match status" value="1"/>
</dbReference>
<dbReference type="PROSITE" id="PS51068">
    <property type="entry name" value="FPG_CAT"/>
    <property type="match status" value="1"/>
</dbReference>
<dbReference type="PROSITE" id="PS01242">
    <property type="entry name" value="ZF_FPG_1"/>
    <property type="match status" value="1"/>
</dbReference>
<dbReference type="PROSITE" id="PS51066">
    <property type="entry name" value="ZF_FPG_2"/>
    <property type="match status" value="1"/>
</dbReference>
<comment type="function">
    <text evidence="2">Involved in base excision repair of DNA damaged by oxidation or by mutagenic agents. Acts as a DNA glycosylase that recognizes and removes damaged bases. Has a preference for oxidized purines, such as 7,8-dihydro-8-oxoguanine (8-oxoG). Has AP (apurinic/apyrimidinic) lyase activity and introduces nicks in the DNA strand. Cleaves the DNA backbone by beta-delta elimination to generate a single-strand break at the site of the removed base with both 3'- and 5'-phosphates.</text>
</comment>
<comment type="catalytic activity">
    <reaction evidence="2">
        <text>Hydrolysis of DNA containing ring-opened 7-methylguanine residues, releasing 2,6-diamino-4-hydroxy-5-(N-methyl)formamidopyrimidine.</text>
        <dbReference type="EC" id="3.2.2.23"/>
    </reaction>
</comment>
<comment type="catalytic activity">
    <reaction evidence="2">
        <text>2'-deoxyribonucleotide-(2'-deoxyribose 5'-phosphate)-2'-deoxyribonucleotide-DNA = a 3'-end 2'-deoxyribonucleotide-(2,3-dehydro-2,3-deoxyribose 5'-phosphate)-DNA + a 5'-end 5'-phospho-2'-deoxyribonucleoside-DNA + H(+)</text>
        <dbReference type="Rhea" id="RHEA:66592"/>
        <dbReference type="Rhea" id="RHEA-COMP:13180"/>
        <dbReference type="Rhea" id="RHEA-COMP:16897"/>
        <dbReference type="Rhea" id="RHEA-COMP:17067"/>
        <dbReference type="ChEBI" id="CHEBI:15378"/>
        <dbReference type="ChEBI" id="CHEBI:136412"/>
        <dbReference type="ChEBI" id="CHEBI:157695"/>
        <dbReference type="ChEBI" id="CHEBI:167181"/>
        <dbReference type="EC" id="4.2.99.18"/>
    </reaction>
</comment>
<comment type="cofactor">
    <cofactor evidence="2">
        <name>Zn(2+)</name>
        <dbReference type="ChEBI" id="CHEBI:29105"/>
    </cofactor>
    <text evidence="2">Binds 1 zinc ion per subunit.</text>
</comment>
<comment type="subunit">
    <text evidence="2">Monomer.</text>
</comment>
<comment type="similarity">
    <text evidence="2">Belongs to the FPG family.</text>
</comment>
<proteinExistence type="inferred from homology"/>
<keyword id="KW-0227">DNA damage</keyword>
<keyword id="KW-0234">DNA repair</keyword>
<keyword id="KW-0238">DNA-binding</keyword>
<keyword id="KW-0326">Glycosidase</keyword>
<keyword id="KW-0378">Hydrolase</keyword>
<keyword id="KW-0456">Lyase</keyword>
<keyword id="KW-0479">Metal-binding</keyword>
<keyword id="KW-0511">Multifunctional enzyme</keyword>
<keyword id="KW-0862">Zinc</keyword>
<keyword id="KW-0863">Zinc-finger</keyword>
<name>FPG_CHESB</name>
<reference key="1">
    <citation type="submission" date="2006-06" db="EMBL/GenBank/DDBJ databases">
        <title>Complete sequence of chromosome of Mesorhizobium sp. BNC1.</title>
        <authorList>
            <consortium name="US DOE Joint Genome Institute"/>
            <person name="Copeland A."/>
            <person name="Lucas S."/>
            <person name="Lapidus A."/>
            <person name="Barry K."/>
            <person name="Detter J.C."/>
            <person name="Glavina del Rio T."/>
            <person name="Hammon N."/>
            <person name="Israni S."/>
            <person name="Dalin E."/>
            <person name="Tice H."/>
            <person name="Pitluck S."/>
            <person name="Chertkov O."/>
            <person name="Brettin T."/>
            <person name="Bruce D."/>
            <person name="Han C."/>
            <person name="Tapia R."/>
            <person name="Gilna P."/>
            <person name="Schmutz J."/>
            <person name="Larimer F."/>
            <person name="Land M."/>
            <person name="Hauser L."/>
            <person name="Kyrpides N."/>
            <person name="Mikhailova N."/>
            <person name="Richardson P."/>
        </authorList>
    </citation>
    <scope>NUCLEOTIDE SEQUENCE [LARGE SCALE GENOMIC DNA]</scope>
    <source>
        <strain>BNC1</strain>
    </source>
</reference>
<accession>Q11AV8</accession>
<protein>
    <recommendedName>
        <fullName evidence="2">Formamidopyrimidine-DNA glycosylase</fullName>
        <shortName evidence="2">Fapy-DNA glycosylase</shortName>
        <ecNumber evidence="2">3.2.2.23</ecNumber>
    </recommendedName>
    <alternativeName>
        <fullName evidence="2">DNA-(apurinic or apyrimidinic site) lyase MutM</fullName>
        <shortName evidence="2">AP lyase MutM</shortName>
        <ecNumber evidence="2">4.2.99.18</ecNumber>
    </alternativeName>
</protein>